<organism>
    <name type="scientific">Streptomyces avermitilis (strain ATCC 31267 / DSM 46492 / JCM 5070 / NBRC 14893 / NCIMB 12804 / NRRL 8165 / MA-4680)</name>
    <dbReference type="NCBI Taxonomy" id="227882"/>
    <lineage>
        <taxon>Bacteria</taxon>
        <taxon>Bacillati</taxon>
        <taxon>Actinomycetota</taxon>
        <taxon>Actinomycetes</taxon>
        <taxon>Kitasatosporales</taxon>
        <taxon>Streptomycetaceae</taxon>
        <taxon>Streptomyces</taxon>
    </lineage>
</organism>
<proteinExistence type="inferred from homology"/>
<sequence length="920" mass="103684">MPVLGLDNITGRIMRAGEGRILRRLQRIAAQVNSLEEEFKALTDEELQALTPEFTRRHADGESLDDLLPEAFATMREAARRTLGMRHFDVQLMGGAALHFGNIAEMQTGEGKTLVGTLPVYLNALTGKGVHLVTVNDYLAERDAEWMGRAYRFLGLTVGVIKSQSTPAERRAQYACDITYGTNTEFGFDYLRDNMAWSQDELVQRGHHFAIVDEADSILIDEARTPLIISGPADQPTQWYGAFAKLVTRMRGVRVQEEQFVTPADKDRLAHLRTTHDYEYDPKKRTVAILDRGVEYLQDQLGIESLYESEHTSLIGHLNNALKAKEHFRKDKDYVVVDGEVLIVDEHTGRILAGRRYNEGLHQAIEAKEAEEGTEAGVTVRNENQTLATITLQNFFRLYEKLAGMTGTAMTEAAEFHQIYQLNVVPIPSNRPMIRRDDPDQIYRTEEAKYAAILADIAERHETGQPILVGTTSVEKSELLSGLLRKQGIRHEVLNAKNHQREAQIVAQAGRRGAVTVATNMAGRGTDIMLGGNPEAMALAALPEDATPEDREAVLDRVGRAAAAEHEEVKELGGLYVLGTERHESRRIDNQLRGRSGRQGDPGASRFYLSLGDDLMRLFRAQVVERVMSMANVPDDVPIENKMVTRAIASAQSQLEQQHFESRKDVLKFDEVLNRQRTLIYAERRRVLAGEDLREQVRHFMDDTIEAYIRQETGEGFPEEWDLERLWGAFRQLYPVGITIEDLEDSVGGRPDLTVDDLVAAVTEDVHDRYARREAELGADALRDLERLVVLSVLDRKWREHLYEMDYLRDGIGLRWTLGREPIVEYEREGFDMFGAMTEAIKEESVGYVFNLDATGREGEGSALDRRPTDGLHFSAPTLDTAEGVVEGRFTTAPAGEPAEHDKAPPHRPGKSRNRRRRKR</sequence>
<accession>Q82K39</accession>
<dbReference type="EC" id="7.4.2.8" evidence="1"/>
<dbReference type="EMBL" id="BA000030">
    <property type="protein sequence ID" value="BAC70276.1"/>
    <property type="molecule type" value="Genomic_DNA"/>
</dbReference>
<dbReference type="SMR" id="Q82K39"/>
<dbReference type="GeneID" id="41539652"/>
<dbReference type="KEGG" id="sma:SAVERM_2565"/>
<dbReference type="eggNOG" id="COG0653">
    <property type="taxonomic scope" value="Bacteria"/>
</dbReference>
<dbReference type="HOGENOM" id="CLU_005314_3_0_11"/>
<dbReference type="OrthoDB" id="9805579at2"/>
<dbReference type="Proteomes" id="UP000000428">
    <property type="component" value="Chromosome"/>
</dbReference>
<dbReference type="GO" id="GO:0031522">
    <property type="term" value="C:cell envelope Sec protein transport complex"/>
    <property type="evidence" value="ECO:0007669"/>
    <property type="project" value="TreeGrafter"/>
</dbReference>
<dbReference type="GO" id="GO:0005829">
    <property type="term" value="C:cytosol"/>
    <property type="evidence" value="ECO:0007669"/>
    <property type="project" value="TreeGrafter"/>
</dbReference>
<dbReference type="GO" id="GO:0005886">
    <property type="term" value="C:plasma membrane"/>
    <property type="evidence" value="ECO:0007669"/>
    <property type="project" value="UniProtKB-SubCell"/>
</dbReference>
<dbReference type="GO" id="GO:0005524">
    <property type="term" value="F:ATP binding"/>
    <property type="evidence" value="ECO:0007669"/>
    <property type="project" value="UniProtKB-UniRule"/>
</dbReference>
<dbReference type="GO" id="GO:0008564">
    <property type="term" value="F:protein-exporting ATPase activity"/>
    <property type="evidence" value="ECO:0007669"/>
    <property type="project" value="UniProtKB-EC"/>
</dbReference>
<dbReference type="GO" id="GO:0065002">
    <property type="term" value="P:intracellular protein transmembrane transport"/>
    <property type="evidence" value="ECO:0007669"/>
    <property type="project" value="UniProtKB-UniRule"/>
</dbReference>
<dbReference type="GO" id="GO:0017038">
    <property type="term" value="P:protein import"/>
    <property type="evidence" value="ECO:0007669"/>
    <property type="project" value="InterPro"/>
</dbReference>
<dbReference type="GO" id="GO:0006605">
    <property type="term" value="P:protein targeting"/>
    <property type="evidence" value="ECO:0007669"/>
    <property type="project" value="UniProtKB-UniRule"/>
</dbReference>
<dbReference type="GO" id="GO:0043952">
    <property type="term" value="P:protein transport by the Sec complex"/>
    <property type="evidence" value="ECO:0007669"/>
    <property type="project" value="TreeGrafter"/>
</dbReference>
<dbReference type="CDD" id="cd17928">
    <property type="entry name" value="DEXDc_SecA"/>
    <property type="match status" value="1"/>
</dbReference>
<dbReference type="CDD" id="cd18803">
    <property type="entry name" value="SF2_C_secA"/>
    <property type="match status" value="1"/>
</dbReference>
<dbReference type="FunFam" id="1.10.3060.10:FF:000002">
    <property type="entry name" value="Preprotein translocase subunit SecA"/>
    <property type="match status" value="1"/>
</dbReference>
<dbReference type="FunFam" id="3.40.50.300:FF:000113">
    <property type="entry name" value="Preprotein translocase subunit SecA"/>
    <property type="match status" value="1"/>
</dbReference>
<dbReference type="FunFam" id="3.40.50.300:FF:000334">
    <property type="entry name" value="Protein translocase subunit SecA"/>
    <property type="match status" value="1"/>
</dbReference>
<dbReference type="FunFam" id="3.90.1440.10:FF:000002">
    <property type="entry name" value="Protein translocase subunit SecA"/>
    <property type="match status" value="1"/>
</dbReference>
<dbReference type="Gene3D" id="1.10.3060.10">
    <property type="entry name" value="Helical scaffold and wing domains of SecA"/>
    <property type="match status" value="1"/>
</dbReference>
<dbReference type="Gene3D" id="3.40.50.300">
    <property type="entry name" value="P-loop containing nucleotide triphosphate hydrolases"/>
    <property type="match status" value="2"/>
</dbReference>
<dbReference type="Gene3D" id="3.90.1440.10">
    <property type="entry name" value="SecA, preprotein cross-linking domain"/>
    <property type="match status" value="1"/>
</dbReference>
<dbReference type="HAMAP" id="MF_01382">
    <property type="entry name" value="SecA"/>
    <property type="match status" value="1"/>
</dbReference>
<dbReference type="InterPro" id="IPR014001">
    <property type="entry name" value="Helicase_ATP-bd"/>
</dbReference>
<dbReference type="InterPro" id="IPR001650">
    <property type="entry name" value="Helicase_C-like"/>
</dbReference>
<dbReference type="InterPro" id="IPR027417">
    <property type="entry name" value="P-loop_NTPase"/>
</dbReference>
<dbReference type="InterPro" id="IPR000185">
    <property type="entry name" value="SecA"/>
</dbReference>
<dbReference type="InterPro" id="IPR020937">
    <property type="entry name" value="SecA_CS"/>
</dbReference>
<dbReference type="InterPro" id="IPR011115">
    <property type="entry name" value="SecA_DEAD"/>
</dbReference>
<dbReference type="InterPro" id="IPR014018">
    <property type="entry name" value="SecA_motor_DEAD"/>
</dbReference>
<dbReference type="InterPro" id="IPR011130">
    <property type="entry name" value="SecA_preprotein_X-link_dom"/>
</dbReference>
<dbReference type="InterPro" id="IPR044722">
    <property type="entry name" value="SecA_SF2_C"/>
</dbReference>
<dbReference type="InterPro" id="IPR011116">
    <property type="entry name" value="SecA_Wing/Scaffold"/>
</dbReference>
<dbReference type="InterPro" id="IPR036266">
    <property type="entry name" value="SecA_Wing/Scaffold_sf"/>
</dbReference>
<dbReference type="InterPro" id="IPR036670">
    <property type="entry name" value="SecA_X-link_sf"/>
</dbReference>
<dbReference type="NCBIfam" id="NF009538">
    <property type="entry name" value="PRK12904.1"/>
    <property type="match status" value="1"/>
</dbReference>
<dbReference type="NCBIfam" id="TIGR00963">
    <property type="entry name" value="secA"/>
    <property type="match status" value="1"/>
</dbReference>
<dbReference type="PANTHER" id="PTHR30612:SF0">
    <property type="entry name" value="CHLOROPLAST PROTEIN-TRANSPORTING ATPASE"/>
    <property type="match status" value="1"/>
</dbReference>
<dbReference type="PANTHER" id="PTHR30612">
    <property type="entry name" value="SECA INNER MEMBRANE COMPONENT OF SEC PROTEIN SECRETION SYSTEM"/>
    <property type="match status" value="1"/>
</dbReference>
<dbReference type="Pfam" id="PF21090">
    <property type="entry name" value="P-loop_SecA"/>
    <property type="match status" value="1"/>
</dbReference>
<dbReference type="Pfam" id="PF07517">
    <property type="entry name" value="SecA_DEAD"/>
    <property type="match status" value="1"/>
</dbReference>
<dbReference type="Pfam" id="PF01043">
    <property type="entry name" value="SecA_PP_bind"/>
    <property type="match status" value="1"/>
</dbReference>
<dbReference type="Pfam" id="PF07516">
    <property type="entry name" value="SecA_SW"/>
    <property type="match status" value="1"/>
</dbReference>
<dbReference type="PRINTS" id="PR00906">
    <property type="entry name" value="SECA"/>
</dbReference>
<dbReference type="SMART" id="SM00957">
    <property type="entry name" value="SecA_DEAD"/>
    <property type="match status" value="1"/>
</dbReference>
<dbReference type="SMART" id="SM00958">
    <property type="entry name" value="SecA_PP_bind"/>
    <property type="match status" value="1"/>
</dbReference>
<dbReference type="SUPFAM" id="SSF81886">
    <property type="entry name" value="Helical scaffold and wing domains of SecA"/>
    <property type="match status" value="1"/>
</dbReference>
<dbReference type="SUPFAM" id="SSF52540">
    <property type="entry name" value="P-loop containing nucleoside triphosphate hydrolases"/>
    <property type="match status" value="2"/>
</dbReference>
<dbReference type="SUPFAM" id="SSF81767">
    <property type="entry name" value="Pre-protein crosslinking domain of SecA"/>
    <property type="match status" value="1"/>
</dbReference>
<dbReference type="PROSITE" id="PS01312">
    <property type="entry name" value="SECA"/>
    <property type="match status" value="1"/>
</dbReference>
<dbReference type="PROSITE" id="PS51196">
    <property type="entry name" value="SECA_MOTOR_DEAD"/>
    <property type="match status" value="1"/>
</dbReference>
<comment type="function">
    <text evidence="1">Part of the Sec protein translocase complex. Interacts with the SecYEG preprotein conducting channel. Has a central role in coupling the hydrolysis of ATP to the transfer of proteins into and across the cell membrane, serving as an ATP-driven molecular motor driving the stepwise translocation of polypeptide chains across the membrane.</text>
</comment>
<comment type="catalytic activity">
    <reaction evidence="1">
        <text>ATP + H2O + cellular proteinSide 1 = ADP + phosphate + cellular proteinSide 2.</text>
        <dbReference type="EC" id="7.4.2.8"/>
    </reaction>
</comment>
<comment type="subunit">
    <text evidence="1">Monomer and homodimer. Part of the essential Sec protein translocation apparatus which comprises SecA, SecYEG and auxiliary proteins SecDF. Other proteins may also be involved.</text>
</comment>
<comment type="subcellular location">
    <subcellularLocation>
        <location evidence="1">Cell membrane</location>
        <topology evidence="1">Peripheral membrane protein</topology>
        <orientation evidence="1">Cytoplasmic side</orientation>
    </subcellularLocation>
    <subcellularLocation>
        <location evidence="1">Cytoplasm</location>
    </subcellularLocation>
    <text evidence="1">Distribution is 50-50.</text>
</comment>
<comment type="similarity">
    <text evidence="1">Belongs to the SecA family.</text>
</comment>
<reference key="1">
    <citation type="journal article" date="2003" name="Nat. Biotechnol.">
        <title>Complete genome sequence and comparative analysis of the industrial microorganism Streptomyces avermitilis.</title>
        <authorList>
            <person name="Ikeda H."/>
            <person name="Ishikawa J."/>
            <person name="Hanamoto A."/>
            <person name="Shinose M."/>
            <person name="Kikuchi H."/>
            <person name="Shiba T."/>
            <person name="Sakaki Y."/>
            <person name="Hattori M."/>
            <person name="Omura S."/>
        </authorList>
    </citation>
    <scope>NUCLEOTIDE SEQUENCE [LARGE SCALE GENOMIC DNA]</scope>
    <source>
        <strain>ATCC 31267 / DSM 46492 / JCM 5070 / NBRC 14893 / NCIMB 12804 / NRRL 8165 / MA-4680</strain>
    </source>
</reference>
<reference key="2">
    <citation type="journal article" date="2001" name="Proc. Natl. Acad. Sci. U.S.A.">
        <title>Genome sequence of an industrial microorganism Streptomyces avermitilis: deducing the ability of producing secondary metabolites.</title>
        <authorList>
            <person name="Omura S."/>
            <person name="Ikeda H."/>
            <person name="Ishikawa J."/>
            <person name="Hanamoto A."/>
            <person name="Takahashi C."/>
            <person name="Shinose M."/>
            <person name="Takahashi Y."/>
            <person name="Horikawa H."/>
            <person name="Nakazawa H."/>
            <person name="Osonoe T."/>
            <person name="Kikuchi H."/>
            <person name="Shiba T."/>
            <person name="Sakaki Y."/>
            <person name="Hattori M."/>
        </authorList>
    </citation>
    <scope>NUCLEOTIDE SEQUENCE [LARGE SCALE GENOMIC DNA]</scope>
    <source>
        <strain>ATCC 31267 / DSM 46492 / JCM 5070 / NBRC 14893 / NCIMB 12804 / NRRL 8165 / MA-4680</strain>
    </source>
</reference>
<protein>
    <recommendedName>
        <fullName evidence="1">Protein translocase subunit SecA 2</fullName>
        <ecNumber evidence="1">7.4.2.8</ecNumber>
    </recommendedName>
</protein>
<evidence type="ECO:0000255" key="1">
    <source>
        <dbReference type="HAMAP-Rule" id="MF_01382"/>
    </source>
</evidence>
<evidence type="ECO:0000256" key="2">
    <source>
        <dbReference type="SAM" id="MobiDB-lite"/>
    </source>
</evidence>
<feature type="chain" id="PRO_0000318463" description="Protein translocase subunit SecA 2">
    <location>
        <begin position="1"/>
        <end position="920"/>
    </location>
</feature>
<feature type="region of interest" description="Disordered" evidence="2">
    <location>
        <begin position="859"/>
        <end position="920"/>
    </location>
</feature>
<feature type="compositionally biased region" description="Basic and acidic residues" evidence="2">
    <location>
        <begin position="859"/>
        <end position="870"/>
    </location>
</feature>
<feature type="compositionally biased region" description="Basic residues" evidence="2">
    <location>
        <begin position="906"/>
        <end position="920"/>
    </location>
</feature>
<feature type="binding site" evidence="1">
    <location>
        <position position="91"/>
    </location>
    <ligand>
        <name>ATP</name>
        <dbReference type="ChEBI" id="CHEBI:30616"/>
    </ligand>
</feature>
<feature type="binding site" evidence="1">
    <location>
        <begin position="109"/>
        <end position="113"/>
    </location>
    <ligand>
        <name>ATP</name>
        <dbReference type="ChEBI" id="CHEBI:30616"/>
    </ligand>
</feature>
<feature type="binding site" evidence="1">
    <location>
        <position position="527"/>
    </location>
    <ligand>
        <name>ATP</name>
        <dbReference type="ChEBI" id="CHEBI:30616"/>
    </ligand>
</feature>
<gene>
    <name evidence="1" type="primary">secA2</name>
    <name type="ordered locus">SAV_2565</name>
</gene>
<keyword id="KW-0067">ATP-binding</keyword>
<keyword id="KW-1003">Cell membrane</keyword>
<keyword id="KW-0963">Cytoplasm</keyword>
<keyword id="KW-0472">Membrane</keyword>
<keyword id="KW-0547">Nucleotide-binding</keyword>
<keyword id="KW-0653">Protein transport</keyword>
<keyword id="KW-1185">Reference proteome</keyword>
<keyword id="KW-1278">Translocase</keyword>
<keyword id="KW-0811">Translocation</keyword>
<keyword id="KW-0813">Transport</keyword>
<name>SECA2_STRAW</name>